<name>SNAK_DROME</name>
<sequence>MIILWSLIVHLQLTCLHLILQTPNLEALDALEIINYQTTKYTIPEVWKEQPVATIGEDVDDQDTEDEESYLKFGDDAEVRTSVSEGLHEGAFCRRSFDGRSGYCILAYQCLHVIREYRVHGTRIDICTHRNNVPVICCPLADKHVLAQRISATKCQEYNAAARRLHLTDTGRTFSGKQCVPSVPLIVGGTPTRHGLFPHMAALGWTQGSGSKDQDIKWGCGGALVSELYVLTAAHCATSGSKPPDMVRLGARQLNETSATQQDIKILIIVLHPKYRSSAYYHDIALLKLTRRVKFSEQVRPACLWQLPELQIPTVVAAGWGRTEFLGAKSNALRQVDLDVVPQMTCKQIYRKERRLPRGIIEGQFCAGYLPGGRDTCQGDSGGPIHALLPEYNCVAFVVGITSFGKFCAAPNAPGVYTRLYSYLDWIEKIAFKQH</sequence>
<reference key="1">
    <citation type="journal article" date="1986" name="Nature">
        <title>A gene required for the specification of dorsal-ventral pattern in Drosophila appears to encode a serine protease.</title>
        <authorList>
            <person name="Delotto R."/>
            <person name="Spierer P."/>
        </authorList>
    </citation>
    <scope>NUCLEOTIDE SEQUENCE [MRNA]</scope>
    <scope>FUNCTION</scope>
</reference>
<reference key="2">
    <citation type="journal article" date="2000" name="Science">
        <title>The genome sequence of Drosophila melanogaster.</title>
        <authorList>
            <person name="Adams M.D."/>
            <person name="Celniker S.E."/>
            <person name="Holt R.A."/>
            <person name="Evans C.A."/>
            <person name="Gocayne J.D."/>
            <person name="Amanatides P.G."/>
            <person name="Scherer S.E."/>
            <person name="Li P.W."/>
            <person name="Hoskins R.A."/>
            <person name="Galle R.F."/>
            <person name="George R.A."/>
            <person name="Lewis S.E."/>
            <person name="Richards S."/>
            <person name="Ashburner M."/>
            <person name="Henderson S.N."/>
            <person name="Sutton G.G."/>
            <person name="Wortman J.R."/>
            <person name="Yandell M.D."/>
            <person name="Zhang Q."/>
            <person name="Chen L.X."/>
            <person name="Brandon R.C."/>
            <person name="Rogers Y.-H.C."/>
            <person name="Blazej R.G."/>
            <person name="Champe M."/>
            <person name="Pfeiffer B.D."/>
            <person name="Wan K.H."/>
            <person name="Doyle C."/>
            <person name="Baxter E.G."/>
            <person name="Helt G."/>
            <person name="Nelson C.R."/>
            <person name="Miklos G.L.G."/>
            <person name="Abril J.F."/>
            <person name="Agbayani A."/>
            <person name="An H.-J."/>
            <person name="Andrews-Pfannkoch C."/>
            <person name="Baldwin D."/>
            <person name="Ballew R.M."/>
            <person name="Basu A."/>
            <person name="Baxendale J."/>
            <person name="Bayraktaroglu L."/>
            <person name="Beasley E.M."/>
            <person name="Beeson K.Y."/>
            <person name="Benos P.V."/>
            <person name="Berman B.P."/>
            <person name="Bhandari D."/>
            <person name="Bolshakov S."/>
            <person name="Borkova D."/>
            <person name="Botchan M.R."/>
            <person name="Bouck J."/>
            <person name="Brokstein P."/>
            <person name="Brottier P."/>
            <person name="Burtis K.C."/>
            <person name="Busam D.A."/>
            <person name="Butler H."/>
            <person name="Cadieu E."/>
            <person name="Center A."/>
            <person name="Chandra I."/>
            <person name="Cherry J.M."/>
            <person name="Cawley S."/>
            <person name="Dahlke C."/>
            <person name="Davenport L.B."/>
            <person name="Davies P."/>
            <person name="de Pablos B."/>
            <person name="Delcher A."/>
            <person name="Deng Z."/>
            <person name="Mays A.D."/>
            <person name="Dew I."/>
            <person name="Dietz S.M."/>
            <person name="Dodson K."/>
            <person name="Doup L.E."/>
            <person name="Downes M."/>
            <person name="Dugan-Rocha S."/>
            <person name="Dunkov B.C."/>
            <person name="Dunn P."/>
            <person name="Durbin K.J."/>
            <person name="Evangelista C.C."/>
            <person name="Ferraz C."/>
            <person name="Ferriera S."/>
            <person name="Fleischmann W."/>
            <person name="Fosler C."/>
            <person name="Gabrielian A.E."/>
            <person name="Garg N.S."/>
            <person name="Gelbart W.M."/>
            <person name="Glasser K."/>
            <person name="Glodek A."/>
            <person name="Gong F."/>
            <person name="Gorrell J.H."/>
            <person name="Gu Z."/>
            <person name="Guan P."/>
            <person name="Harris M."/>
            <person name="Harris N.L."/>
            <person name="Harvey D.A."/>
            <person name="Heiman T.J."/>
            <person name="Hernandez J.R."/>
            <person name="Houck J."/>
            <person name="Hostin D."/>
            <person name="Houston K.A."/>
            <person name="Howland T.J."/>
            <person name="Wei M.-H."/>
            <person name="Ibegwam C."/>
            <person name="Jalali M."/>
            <person name="Kalush F."/>
            <person name="Karpen G.H."/>
            <person name="Ke Z."/>
            <person name="Kennison J.A."/>
            <person name="Ketchum K.A."/>
            <person name="Kimmel B.E."/>
            <person name="Kodira C.D."/>
            <person name="Kraft C.L."/>
            <person name="Kravitz S."/>
            <person name="Kulp D."/>
            <person name="Lai Z."/>
            <person name="Lasko P."/>
            <person name="Lei Y."/>
            <person name="Levitsky A.A."/>
            <person name="Li J.H."/>
            <person name="Li Z."/>
            <person name="Liang Y."/>
            <person name="Lin X."/>
            <person name="Liu X."/>
            <person name="Mattei B."/>
            <person name="McIntosh T.C."/>
            <person name="McLeod M.P."/>
            <person name="McPherson D."/>
            <person name="Merkulov G."/>
            <person name="Milshina N.V."/>
            <person name="Mobarry C."/>
            <person name="Morris J."/>
            <person name="Moshrefi A."/>
            <person name="Mount S.M."/>
            <person name="Moy M."/>
            <person name="Murphy B."/>
            <person name="Murphy L."/>
            <person name="Muzny D.M."/>
            <person name="Nelson D.L."/>
            <person name="Nelson D.R."/>
            <person name="Nelson K.A."/>
            <person name="Nixon K."/>
            <person name="Nusskern D.R."/>
            <person name="Pacleb J.M."/>
            <person name="Palazzolo M."/>
            <person name="Pittman G.S."/>
            <person name="Pan S."/>
            <person name="Pollard J."/>
            <person name="Puri V."/>
            <person name="Reese M.G."/>
            <person name="Reinert K."/>
            <person name="Remington K."/>
            <person name="Saunders R.D.C."/>
            <person name="Scheeler F."/>
            <person name="Shen H."/>
            <person name="Shue B.C."/>
            <person name="Siden-Kiamos I."/>
            <person name="Simpson M."/>
            <person name="Skupski M.P."/>
            <person name="Smith T.J."/>
            <person name="Spier E."/>
            <person name="Spradling A.C."/>
            <person name="Stapleton M."/>
            <person name="Strong R."/>
            <person name="Sun E."/>
            <person name="Svirskas R."/>
            <person name="Tector C."/>
            <person name="Turner R."/>
            <person name="Venter E."/>
            <person name="Wang A.H."/>
            <person name="Wang X."/>
            <person name="Wang Z.-Y."/>
            <person name="Wassarman D.A."/>
            <person name="Weinstock G.M."/>
            <person name="Weissenbach J."/>
            <person name="Williams S.M."/>
            <person name="Woodage T."/>
            <person name="Worley K.C."/>
            <person name="Wu D."/>
            <person name="Yang S."/>
            <person name="Yao Q.A."/>
            <person name="Ye J."/>
            <person name="Yeh R.-F."/>
            <person name="Zaveri J.S."/>
            <person name="Zhan M."/>
            <person name="Zhang G."/>
            <person name="Zhao Q."/>
            <person name="Zheng L."/>
            <person name="Zheng X.H."/>
            <person name="Zhong F.N."/>
            <person name="Zhong W."/>
            <person name="Zhou X."/>
            <person name="Zhu S.C."/>
            <person name="Zhu X."/>
            <person name="Smith H.O."/>
            <person name="Gibbs R.A."/>
            <person name="Myers E.W."/>
            <person name="Rubin G.M."/>
            <person name="Venter J.C."/>
        </authorList>
    </citation>
    <scope>NUCLEOTIDE SEQUENCE [LARGE SCALE GENOMIC DNA]</scope>
    <source>
        <strain>Berkeley</strain>
    </source>
</reference>
<reference key="3">
    <citation type="journal article" date="2002" name="Genome Biol.">
        <title>Annotation of the Drosophila melanogaster euchromatic genome: a systematic review.</title>
        <authorList>
            <person name="Misra S."/>
            <person name="Crosby M.A."/>
            <person name="Mungall C.J."/>
            <person name="Matthews B.B."/>
            <person name="Campbell K.S."/>
            <person name="Hradecky P."/>
            <person name="Huang Y."/>
            <person name="Kaminker J.S."/>
            <person name="Millburn G.H."/>
            <person name="Prochnik S.E."/>
            <person name="Smith C.D."/>
            <person name="Tupy J.L."/>
            <person name="Whitfield E.J."/>
            <person name="Bayraktaroglu L."/>
            <person name="Berman B.P."/>
            <person name="Bettencourt B.R."/>
            <person name="Celniker S.E."/>
            <person name="de Grey A.D.N.J."/>
            <person name="Drysdale R.A."/>
            <person name="Harris N.L."/>
            <person name="Richter J."/>
            <person name="Russo S."/>
            <person name="Schroeder A.J."/>
            <person name="Shu S.Q."/>
            <person name="Stapleton M."/>
            <person name="Yamada C."/>
            <person name="Ashburner M."/>
            <person name="Gelbart W.M."/>
            <person name="Rubin G.M."/>
            <person name="Lewis S.E."/>
        </authorList>
    </citation>
    <scope>GENOME REANNOTATION</scope>
    <source>
        <strain>Berkeley</strain>
    </source>
</reference>
<reference key="4">
    <citation type="submission" date="2006-01" db="EMBL/GenBank/DDBJ databases">
        <authorList>
            <person name="Stapleton M."/>
            <person name="Carlson J.W."/>
            <person name="Chavez C."/>
            <person name="Frise E."/>
            <person name="George R.A."/>
            <person name="Pacleb J.M."/>
            <person name="Park S."/>
            <person name="Wan K.H."/>
            <person name="Yu C."/>
            <person name="Celniker S.E."/>
        </authorList>
    </citation>
    <scope>NUCLEOTIDE SEQUENCE [LARGE SCALE MRNA]</scope>
</reference>
<reference key="5">
    <citation type="journal article" date="1998" name="Development">
        <title>Positive and negative regulation of Easter, a member of the serine protease family that controls dorsal-ventral patterning in the Drosophila embryo.</title>
        <authorList>
            <person name="Misra S."/>
            <person name="Hecht P."/>
            <person name="Maeda R."/>
            <person name="Anderson K.V."/>
        </authorList>
    </citation>
    <scope>CLEAVAGE OF EASTER</scope>
    <scope>SUBCELLULAR LOCATION</scope>
</reference>
<reference key="6">
    <citation type="journal article" date="2010" name="Curr. Biol.">
        <title>Pipe-dependent ventral processing of Easter by Snake is the defining step in Drosophila embryo DV axis formation.</title>
        <authorList>
            <person name="Cho Y.S."/>
            <person name="Stevens L.M."/>
            <person name="Stein D."/>
        </authorList>
    </citation>
    <scope>FUNCTION</scope>
    <scope>INTERACTION WITH EA</scope>
    <scope>CLEAVAGE BY GD</scope>
    <scope>MUTAGENESIS OF PRO-184</scope>
</reference>
<protein>
    <recommendedName>
        <fullName evidence="9">Serine protease snk</fullName>
        <ecNumber evidence="3">3.4.21.-</ecNumber>
    </recommendedName>
    <alternativeName>
        <fullName evidence="11">Protein snake</fullName>
    </alternativeName>
</protein>
<keyword id="KW-0217">Developmental protein</keyword>
<keyword id="KW-1015">Disulfide bond</keyword>
<keyword id="KW-0325">Glycoprotein</keyword>
<keyword id="KW-0378">Hydrolase</keyword>
<keyword id="KW-0645">Protease</keyword>
<keyword id="KW-1185">Reference proteome</keyword>
<keyword id="KW-0964">Secreted</keyword>
<keyword id="KW-0720">Serine protease</keyword>
<keyword id="KW-0732">Signal</keyword>
<keyword id="KW-0865">Zymogen</keyword>
<accession>P05049</accession>
<accession>Q29QH0</accession>
<accession>Q9VFZ7</accession>
<organism evidence="12">
    <name type="scientific">Drosophila melanogaster</name>
    <name type="common">Fruit fly</name>
    <dbReference type="NCBI Taxonomy" id="7227"/>
    <lineage>
        <taxon>Eukaryota</taxon>
        <taxon>Metazoa</taxon>
        <taxon>Ecdysozoa</taxon>
        <taxon>Arthropoda</taxon>
        <taxon>Hexapoda</taxon>
        <taxon>Insecta</taxon>
        <taxon>Pterygota</taxon>
        <taxon>Neoptera</taxon>
        <taxon>Endopterygota</taxon>
        <taxon>Diptera</taxon>
        <taxon>Brachycera</taxon>
        <taxon>Muscomorpha</taxon>
        <taxon>Ephydroidea</taxon>
        <taxon>Drosophilidae</taxon>
        <taxon>Drosophila</taxon>
        <taxon>Sophophora</taxon>
    </lineage>
</organism>
<comment type="function">
    <text evidence="6 7 10">Component of the extracellular signaling pathway that establishes the dorsal-ventral pathway of the embryo (PubMed:11486795). A protease cascade involving ndl, gd, snk and ea results in activation of the spz Toll receptor ligand; acts downstream of ndl and gd (PubMed:20605458). Activation of ea requires both activation of the ndl-gd-snk protease cascade and sulfation of a vitelline membrane component by pip (PubMed:20605458). Localized activation of the Toll receptor in the ventral region of the embryo defines cell identities along the dorsal-ventral continuum (Probable).</text>
</comment>
<comment type="subunit">
    <text evidence="7">Interacts (via N-terminal prodomain) with ea/easter (via Peptidase domain); leads to proteolytic activation of ea by snk (PubMed:20605458). This interaction does not require sulfation of a vitelline membrane component by pip but proteolytic cleavage of ea by snk does (PubMed:20605458).</text>
</comment>
<comment type="subcellular location">
    <subcellularLocation>
        <location evidence="8">Secreted</location>
    </subcellularLocation>
</comment>
<comment type="domain">
    <text evidence="5">The clip domain consists of 35-55 residues which are 'knitted' together usually by 3 conserved disulfide bonds forming a clip-like compact structure.</text>
</comment>
<comment type="PTM">
    <text evidence="7">Proteolytically activated by gd (PubMed:20605458). May also be cleaved by another protease (PubMed:20605458).</text>
</comment>
<comment type="similarity">
    <text evidence="5">Belongs to the peptidase S1 family. CLIP subfamily.</text>
</comment>
<proteinExistence type="evidence at protein level"/>
<evidence type="ECO:0000250" key="1">
    <source>
        <dbReference type="UniProtKB" id="Q9VB68"/>
    </source>
</evidence>
<evidence type="ECO:0000255" key="2"/>
<evidence type="ECO:0000255" key="3">
    <source>
        <dbReference type="PROSITE-ProRule" id="PRU00274"/>
    </source>
</evidence>
<evidence type="ECO:0000255" key="4">
    <source>
        <dbReference type="PROSITE-ProRule" id="PRU00498"/>
    </source>
</evidence>
<evidence type="ECO:0000255" key="5">
    <source>
        <dbReference type="PROSITE-ProRule" id="PRU01236"/>
    </source>
</evidence>
<evidence type="ECO:0000269" key="6">
    <source>
    </source>
</evidence>
<evidence type="ECO:0000269" key="7">
    <source>
    </source>
</evidence>
<evidence type="ECO:0000269" key="8">
    <source>
    </source>
</evidence>
<evidence type="ECO:0000305" key="9"/>
<evidence type="ECO:0000305" key="10">
    <source>
    </source>
</evidence>
<evidence type="ECO:0000312" key="11">
    <source>
        <dbReference type="FlyBase" id="FBgn0003450"/>
    </source>
</evidence>
<evidence type="ECO:0000312" key="12">
    <source>
        <dbReference type="Proteomes" id="UP000000803"/>
    </source>
</evidence>
<dbReference type="EC" id="3.4.21.-" evidence="3"/>
<dbReference type="EMBL" id="X04513">
    <property type="protein sequence ID" value="CAA28197.1"/>
    <property type="molecule type" value="mRNA"/>
</dbReference>
<dbReference type="EMBL" id="AE014297">
    <property type="protein sequence ID" value="AAF54897.1"/>
    <property type="molecule type" value="Genomic_DNA"/>
</dbReference>
<dbReference type="EMBL" id="BT024420">
    <property type="protein sequence ID" value="ABC86482.1"/>
    <property type="molecule type" value="mRNA"/>
</dbReference>
<dbReference type="PIR" id="A24702">
    <property type="entry name" value="A24702"/>
</dbReference>
<dbReference type="RefSeq" id="NP_001097766.1">
    <property type="nucleotide sequence ID" value="NM_001104296.2"/>
</dbReference>
<dbReference type="RefSeq" id="NP_524338.2">
    <property type="nucleotide sequence ID" value="NM_079614.3"/>
</dbReference>
<dbReference type="SMR" id="P05049"/>
<dbReference type="BioGRID" id="66694">
    <property type="interactions" value="3"/>
</dbReference>
<dbReference type="FunCoup" id="P05049">
    <property type="interactions" value="10"/>
</dbReference>
<dbReference type="STRING" id="7227.FBpp0111746"/>
<dbReference type="MEROPS" id="S01.200"/>
<dbReference type="PaxDb" id="7227-FBpp0111746"/>
<dbReference type="DNASU" id="41607"/>
<dbReference type="EnsemblMetazoa" id="FBtr0082716">
    <property type="protein sequence ID" value="FBpp0082184"/>
    <property type="gene ID" value="FBgn0003450"/>
</dbReference>
<dbReference type="EnsemblMetazoa" id="FBtr0112833">
    <property type="protein sequence ID" value="FBpp0111746"/>
    <property type="gene ID" value="FBgn0003450"/>
</dbReference>
<dbReference type="GeneID" id="41607"/>
<dbReference type="KEGG" id="dme:Dmel_CG7996"/>
<dbReference type="UCSC" id="CG7996-RA">
    <property type="organism name" value="d. melanogaster"/>
</dbReference>
<dbReference type="AGR" id="FB:FBgn0003450"/>
<dbReference type="CTD" id="41607"/>
<dbReference type="FlyBase" id="FBgn0003450">
    <property type="gene designation" value="snk"/>
</dbReference>
<dbReference type="VEuPathDB" id="VectorBase:FBgn0003450"/>
<dbReference type="eggNOG" id="KOG3627">
    <property type="taxonomic scope" value="Eukaryota"/>
</dbReference>
<dbReference type="GeneTree" id="ENSGT00940000168826"/>
<dbReference type="HOGENOM" id="CLU_006842_0_3_1"/>
<dbReference type="InParanoid" id="P05049"/>
<dbReference type="OMA" id="VDIKWGC"/>
<dbReference type="OrthoDB" id="6339452at2759"/>
<dbReference type="PhylomeDB" id="P05049"/>
<dbReference type="Reactome" id="R-DME-209442">
    <property type="pathway name" value="Formation of the trans-membrane 'signalling complex'"/>
</dbReference>
<dbReference type="BioGRID-ORCS" id="41607">
    <property type="hits" value="0 hits in 1 CRISPR screen"/>
</dbReference>
<dbReference type="GenomeRNAi" id="41607"/>
<dbReference type="PRO" id="PR:P05049"/>
<dbReference type="Proteomes" id="UP000000803">
    <property type="component" value="Chromosome 3R"/>
</dbReference>
<dbReference type="Bgee" id="FBgn0003450">
    <property type="expression patterns" value="Expressed in egg chamber and 4 other cell types or tissues"/>
</dbReference>
<dbReference type="ExpressionAtlas" id="P05049">
    <property type="expression patterns" value="baseline and differential"/>
</dbReference>
<dbReference type="GO" id="GO:0005576">
    <property type="term" value="C:extracellular region"/>
    <property type="evidence" value="ECO:0000304"/>
    <property type="project" value="Reactome"/>
</dbReference>
<dbReference type="GO" id="GO:0005615">
    <property type="term" value="C:extracellular space"/>
    <property type="evidence" value="ECO:0000318"/>
    <property type="project" value="GO_Central"/>
</dbReference>
<dbReference type="GO" id="GO:0004252">
    <property type="term" value="F:serine-type endopeptidase activity"/>
    <property type="evidence" value="ECO:0000314"/>
    <property type="project" value="FlyBase"/>
</dbReference>
<dbReference type="GO" id="GO:0009950">
    <property type="term" value="P:dorsal/ventral axis specification"/>
    <property type="evidence" value="ECO:0000316"/>
    <property type="project" value="FlyBase"/>
</dbReference>
<dbReference type="GO" id="GO:0045087">
    <property type="term" value="P:innate immune response"/>
    <property type="evidence" value="ECO:0000318"/>
    <property type="project" value="GO_Central"/>
</dbReference>
<dbReference type="GO" id="GO:0006508">
    <property type="term" value="P:proteolysis"/>
    <property type="evidence" value="ECO:0000255"/>
    <property type="project" value="FlyBase"/>
</dbReference>
<dbReference type="GO" id="GO:0160032">
    <property type="term" value="P:Toll receptor ligand protein activation cascade"/>
    <property type="evidence" value="ECO:0000314"/>
    <property type="project" value="FlyBase"/>
</dbReference>
<dbReference type="GO" id="GO:0031638">
    <property type="term" value="P:zymogen activation"/>
    <property type="evidence" value="ECO:0000315"/>
    <property type="project" value="FlyBase"/>
</dbReference>
<dbReference type="CDD" id="cd00190">
    <property type="entry name" value="Tryp_SPc"/>
    <property type="match status" value="1"/>
</dbReference>
<dbReference type="FunFam" id="2.40.10.10:FF:000047">
    <property type="entry name" value="Trypsin eta"/>
    <property type="match status" value="1"/>
</dbReference>
<dbReference type="Gene3D" id="2.40.10.10">
    <property type="entry name" value="Trypsin-like serine proteases"/>
    <property type="match status" value="1"/>
</dbReference>
<dbReference type="InterPro" id="IPR022700">
    <property type="entry name" value="CLIP"/>
</dbReference>
<dbReference type="InterPro" id="IPR051333">
    <property type="entry name" value="CLIP_Serine_Protease"/>
</dbReference>
<dbReference type="InterPro" id="IPR009003">
    <property type="entry name" value="Peptidase_S1_PA"/>
</dbReference>
<dbReference type="InterPro" id="IPR043504">
    <property type="entry name" value="Peptidase_S1_PA_chymotrypsin"/>
</dbReference>
<dbReference type="InterPro" id="IPR001314">
    <property type="entry name" value="Peptidase_S1A"/>
</dbReference>
<dbReference type="InterPro" id="IPR001254">
    <property type="entry name" value="Trypsin_dom"/>
</dbReference>
<dbReference type="InterPro" id="IPR018114">
    <property type="entry name" value="TRYPSIN_HIS"/>
</dbReference>
<dbReference type="InterPro" id="IPR033116">
    <property type="entry name" value="TRYPSIN_SER"/>
</dbReference>
<dbReference type="PANTHER" id="PTHR24260">
    <property type="match status" value="1"/>
</dbReference>
<dbReference type="PANTHER" id="PTHR24260:SF147">
    <property type="entry name" value="EG:BACR7A4.3 PROTEIN-RELATED"/>
    <property type="match status" value="1"/>
</dbReference>
<dbReference type="Pfam" id="PF00089">
    <property type="entry name" value="Trypsin"/>
    <property type="match status" value="1"/>
</dbReference>
<dbReference type="PRINTS" id="PR00722">
    <property type="entry name" value="CHYMOTRYPSIN"/>
</dbReference>
<dbReference type="SMART" id="SM00680">
    <property type="entry name" value="CLIP"/>
    <property type="match status" value="1"/>
</dbReference>
<dbReference type="SMART" id="SM00020">
    <property type="entry name" value="Tryp_SPc"/>
    <property type="match status" value="1"/>
</dbReference>
<dbReference type="SUPFAM" id="SSF50494">
    <property type="entry name" value="Trypsin-like serine proteases"/>
    <property type="match status" value="1"/>
</dbReference>
<dbReference type="PROSITE" id="PS51888">
    <property type="entry name" value="CLIP"/>
    <property type="match status" value="1"/>
</dbReference>
<dbReference type="PROSITE" id="PS50240">
    <property type="entry name" value="TRYPSIN_DOM"/>
    <property type="match status" value="1"/>
</dbReference>
<dbReference type="PROSITE" id="PS00134">
    <property type="entry name" value="TRYPSIN_HIS"/>
    <property type="match status" value="1"/>
</dbReference>
<dbReference type="PROSITE" id="PS00135">
    <property type="entry name" value="TRYPSIN_SER"/>
    <property type="match status" value="1"/>
</dbReference>
<feature type="signal peptide" evidence="2">
    <location>
        <begin position="1"/>
        <end position="27"/>
    </location>
</feature>
<feature type="chain" id="PRO_0000028132" description="Serine protease snk">
    <location>
        <begin position="28"/>
        <end position="435"/>
    </location>
</feature>
<feature type="domain" description="Clip" evidence="5">
    <location>
        <begin position="92"/>
        <end position="138"/>
    </location>
</feature>
<feature type="domain" description="Peptidase S1" evidence="3">
    <location>
        <begin position="186"/>
        <end position="432"/>
    </location>
</feature>
<feature type="active site" description="Charge relay system" evidence="3">
    <location>
        <position position="235"/>
    </location>
</feature>
<feature type="active site" description="Charge relay system" evidence="3">
    <location>
        <position position="283"/>
    </location>
</feature>
<feature type="active site" description="Charge relay system" evidence="3">
    <location>
        <position position="381"/>
    </location>
</feature>
<feature type="glycosylation site" description="N-linked (GlcNAc...) asparagine" evidence="4">
    <location>
        <position position="255"/>
    </location>
</feature>
<feature type="disulfide bond" evidence="5">
    <location>
        <begin position="93"/>
        <end position="137"/>
    </location>
</feature>
<feature type="disulfide bond" evidence="5">
    <location>
        <begin position="104"/>
        <end position="127"/>
    </location>
</feature>
<feature type="disulfide bond" evidence="5">
    <location>
        <begin position="110"/>
        <end position="138"/>
    </location>
</feature>
<feature type="disulfide bond" evidence="1">
    <location>
        <begin position="179"/>
        <end position="303"/>
    </location>
</feature>
<feature type="disulfide bond" evidence="3">
    <location>
        <begin position="220"/>
        <end position="236"/>
    </location>
</feature>
<feature type="disulfide bond" evidence="3">
    <location>
        <begin position="346"/>
        <end position="366"/>
    </location>
</feature>
<feature type="disulfide bond" evidence="3">
    <location>
        <begin position="377"/>
        <end position="408"/>
    </location>
</feature>
<feature type="mutagenesis site" description="Blocks cleavage by gd." evidence="7">
    <original>P</original>
    <variation>L</variation>
    <location>
        <position position="184"/>
    </location>
</feature>
<feature type="sequence conflict" description="In Ref. 1; CAA28197." evidence="9" ref="1">
    <original>AT</original>
    <variation>QA</variation>
    <location>
        <begin position="53"/>
        <end position="54"/>
    </location>
</feature>
<feature type="sequence conflict" description="In Ref. 1; CAA28197." evidence="9" ref="1">
    <original>A</original>
    <variation>R</variation>
    <location>
        <position position="91"/>
    </location>
</feature>
<feature type="sequence conflict" description="In Ref. 1; CAA28197." evidence="9" ref="1">
    <original>S</original>
    <variation>T</variation>
    <location>
        <position position="96"/>
    </location>
</feature>
<feature type="sequence conflict" description="In Ref. 1; CAA28197." evidence="9" ref="1">
    <original>CILAYQCLHVIREYRVHGTR</original>
    <variation>ASWPISGSTSSESIGCMA</variation>
    <location>
        <begin position="104"/>
        <end position="123"/>
    </location>
</feature>
<feature type="sequence conflict" description="In Ref. 1; CAA28197." evidence="9" ref="1">
    <original>G</original>
    <variation>V</variation>
    <location>
        <position position="171"/>
    </location>
</feature>
<feature type="sequence conflict" description="In Ref. 1; CAA28197." evidence="9" ref="1">
    <original>SKPPDMVRLGAR</original>
    <variation>ANHRTWFAWRP</variation>
    <location>
        <begin position="241"/>
        <end position="252"/>
    </location>
</feature>
<feature type="sequence conflict" description="In Ref. 1; CAA28197." evidence="9" ref="1">
    <original>LPELQIP</original>
    <variation>CGAPHT</variation>
    <location>
        <begin position="307"/>
        <end position="313"/>
    </location>
</feature>
<feature type="sequence conflict" description="In Ref. 1; CAA28197." evidence="9" ref="1">
    <original>V</original>
    <variation>S</variation>
    <location>
        <position position="341"/>
    </location>
</feature>
<feature type="sequence conflict" description="In Ref. 1; CAA28197." evidence="9" ref="1">
    <original>PGGRDT</original>
    <variation>QAQGH</variation>
    <location>
        <begin position="371"/>
        <end position="376"/>
    </location>
</feature>
<gene>
    <name evidence="11" type="primary">snk</name>
    <name evidence="11" type="ORF">CG7996</name>
</gene>